<dbReference type="EMBL" id="AL590442">
    <property type="protein sequence ID" value="CAD25105.2"/>
    <property type="molecule type" value="Genomic_DNA"/>
</dbReference>
<dbReference type="RefSeq" id="NP_584601.1">
    <property type="nucleotide sequence ID" value="NM_001040790.1"/>
</dbReference>
<dbReference type="PDB" id="7QEP">
    <property type="method" value="EM"/>
    <property type="resolution" value="2.70 A"/>
    <property type="chains" value="L8=1-206"/>
</dbReference>
<dbReference type="PDBsum" id="7QEP"/>
<dbReference type="EMDB" id="EMD-13936"/>
<dbReference type="SMR" id="Q8SSG1"/>
<dbReference type="FunCoup" id="Q8SSG1">
    <property type="interactions" value="233"/>
</dbReference>
<dbReference type="STRING" id="284813.Q8SSG1"/>
<dbReference type="VEuPathDB" id="MicrosporidiaDB:ECU02_0750i"/>
<dbReference type="HOGENOM" id="CLU_055193_1_1_1"/>
<dbReference type="InParanoid" id="Q8SSG1"/>
<dbReference type="OrthoDB" id="29563at2759"/>
<dbReference type="Proteomes" id="UP000000819">
    <property type="component" value="Chromosome II"/>
</dbReference>
<dbReference type="GO" id="GO:0005737">
    <property type="term" value="C:cytoplasm"/>
    <property type="evidence" value="ECO:0007669"/>
    <property type="project" value="UniProtKB-SubCell"/>
</dbReference>
<dbReference type="GO" id="GO:1990904">
    <property type="term" value="C:ribonucleoprotein complex"/>
    <property type="evidence" value="ECO:0007669"/>
    <property type="project" value="UniProtKB-KW"/>
</dbReference>
<dbReference type="GO" id="GO:0005840">
    <property type="term" value="C:ribosome"/>
    <property type="evidence" value="ECO:0007669"/>
    <property type="project" value="UniProtKB-KW"/>
</dbReference>
<dbReference type="GO" id="GO:0003723">
    <property type="term" value="F:RNA binding"/>
    <property type="evidence" value="ECO:0007669"/>
    <property type="project" value="InterPro"/>
</dbReference>
<dbReference type="Gene3D" id="3.30.1330.30">
    <property type="match status" value="1"/>
</dbReference>
<dbReference type="InterPro" id="IPR050257">
    <property type="entry name" value="eL8/uL1-like"/>
</dbReference>
<dbReference type="InterPro" id="IPR029064">
    <property type="entry name" value="Ribosomal_eL30-like_sf"/>
</dbReference>
<dbReference type="InterPro" id="IPR004038">
    <property type="entry name" value="Ribosomal_eL8/eL30/eS12/Gad45"/>
</dbReference>
<dbReference type="InterPro" id="IPR018492">
    <property type="entry name" value="Ribosomal_eL8/Nhp2"/>
</dbReference>
<dbReference type="InterPro" id="IPR001921">
    <property type="entry name" value="Ribosomal_eL8_euk"/>
</dbReference>
<dbReference type="PANTHER" id="PTHR23105">
    <property type="entry name" value="RIBOSOMAL PROTEIN L7AE FAMILY MEMBER"/>
    <property type="match status" value="1"/>
</dbReference>
<dbReference type="Pfam" id="PF01248">
    <property type="entry name" value="Ribosomal_L7Ae"/>
    <property type="match status" value="1"/>
</dbReference>
<dbReference type="PRINTS" id="PR00881">
    <property type="entry name" value="L7ARS6FAMILY"/>
</dbReference>
<dbReference type="PRINTS" id="PR00882">
    <property type="entry name" value="RIBOSOMALL7A"/>
</dbReference>
<dbReference type="SUPFAM" id="SSF55315">
    <property type="entry name" value="L30e-like"/>
    <property type="match status" value="1"/>
</dbReference>
<sequence>MVLGKVKKIPVEEPRLTKEQKIERDLLIKKKVSKLANSIRIPPAIYQFRTVLSEHDTKKFVELFMKYRPENKQEKRIRLQSEDPKKGPKPILVKFGLKHVTNLIETKKAKLVLISASVDPIEVVIFLPTLCRKMGVSYAIVENSTLLGKLVNLKTTSCVCLCDVRPEDEGSFKEMLRTADAIFLDNYETHLSTWGGLPQKEADEKQ</sequence>
<proteinExistence type="evidence at protein level"/>
<protein>
    <recommendedName>
        <fullName evidence="3">Large ribosomal subunit protein eL8</fullName>
    </recommendedName>
    <alternativeName>
        <fullName>60S ribosomal protein L7a</fullName>
    </alternativeName>
</protein>
<gene>
    <name type="primary">RPL7A</name>
    <name type="ordered locus">ECU02_0750i</name>
</gene>
<accession>Q8SSG1</accession>
<keyword id="KW-0002">3D-structure</keyword>
<keyword id="KW-0963">Cytoplasm</keyword>
<keyword id="KW-1185">Reference proteome</keyword>
<keyword id="KW-0687">Ribonucleoprotein</keyword>
<keyword id="KW-0689">Ribosomal protein</keyword>
<evidence type="ECO:0000250" key="1"/>
<evidence type="ECO:0000269" key="2">
    <source>
    </source>
</evidence>
<evidence type="ECO:0000305" key="3"/>
<name>RL7A_ENCCU</name>
<comment type="subunit">
    <text evidence="1">Component of the large ribosomal subunit.</text>
</comment>
<comment type="subcellular location">
    <subcellularLocation>
        <location evidence="1">Cytoplasm</location>
    </subcellularLocation>
</comment>
<comment type="developmental stage">
    <text evidence="2">Expressed in late sporogonial stages.</text>
</comment>
<comment type="similarity">
    <text evidence="3">Belongs to the eukaryotic ribosomal protein eL8 family.</text>
</comment>
<feature type="chain" id="PRO_0000383130" description="Large ribosomal subunit protein eL8">
    <location>
        <begin position="1"/>
        <end position="206"/>
    </location>
</feature>
<organism>
    <name type="scientific">Encephalitozoon cuniculi (strain GB-M1)</name>
    <name type="common">Microsporidian parasite</name>
    <dbReference type="NCBI Taxonomy" id="284813"/>
    <lineage>
        <taxon>Eukaryota</taxon>
        <taxon>Fungi</taxon>
        <taxon>Fungi incertae sedis</taxon>
        <taxon>Microsporidia</taxon>
        <taxon>Unikaryonidae</taxon>
        <taxon>Encephalitozoon</taxon>
    </lineage>
</organism>
<reference key="1">
    <citation type="journal article" date="2001" name="Nature">
        <title>Genome sequence and gene compaction of the eukaryote parasite Encephalitozoon cuniculi.</title>
        <authorList>
            <person name="Katinka M.D."/>
            <person name="Duprat S."/>
            <person name="Cornillot E."/>
            <person name="Metenier G."/>
            <person name="Thomarat F."/>
            <person name="Prensier G."/>
            <person name="Barbe V."/>
            <person name="Peyretaillade E."/>
            <person name="Brottier P."/>
            <person name="Wincker P."/>
            <person name="Delbac F."/>
            <person name="El Alaoui H."/>
            <person name="Peyret P."/>
            <person name="Saurin W."/>
            <person name="Gouy M."/>
            <person name="Weissenbach J."/>
            <person name="Vivares C.P."/>
        </authorList>
    </citation>
    <scope>NUCLEOTIDE SEQUENCE [LARGE SCALE GENOMIC DNA]</scope>
    <source>
        <strain>GB-M1</strain>
    </source>
</reference>
<reference key="2">
    <citation type="journal article" date="2009" name="BMC Genomics">
        <title>Identification of transcriptional signals in Encephalitozoon cuniculi widespread among Microsporidia phylum: support for accurate structural genome annotation.</title>
        <authorList>
            <person name="Peyretaillade E."/>
            <person name="Goncalves O."/>
            <person name="Terrat S."/>
            <person name="Dugat-Bony E."/>
            <person name="Wincker P."/>
            <person name="Cornman R.S."/>
            <person name="Evans J.D."/>
            <person name="Delbac F."/>
            <person name="Peyret P."/>
        </authorList>
    </citation>
    <scope>GENOME REANNOTATION</scope>
    <source>
        <strain>GB-M1</strain>
    </source>
</reference>
<reference key="3">
    <citation type="journal article" date="2006" name="Proteomics">
        <title>Proteomic analysis of the eukaryotic parasite Encephalitozoon cuniculi (microsporidia): a reference map for proteins expressed in late sporogonial stages.</title>
        <authorList>
            <person name="Brosson D."/>
            <person name="Kuhn L."/>
            <person name="Delbac F."/>
            <person name="Garin J."/>
            <person name="Vivares C.P."/>
            <person name="Texier C."/>
        </authorList>
    </citation>
    <scope>IDENTIFICATION BY MASS SPECTROMETRY [LARGE SCALE ANALYSIS]</scope>
    <scope>DEVELOPMENTAL STAGE</scope>
</reference>